<proteinExistence type="inferred from homology"/>
<comment type="function">
    <text evidence="1">Component of the acetyl coenzyme A carboxylase (ACC) complex. Biotin carboxylase (BC) catalyzes the carboxylation of biotin on its carrier protein (BCCP) and then the CO(2) group is transferred by the transcarboxylase to acetyl-CoA to form malonyl-CoA.</text>
</comment>
<comment type="catalytic activity">
    <reaction evidence="1">
        <text>N(6)-carboxybiotinyl-L-lysyl-[protein] + acetyl-CoA = N(6)-biotinyl-L-lysyl-[protein] + malonyl-CoA</text>
        <dbReference type="Rhea" id="RHEA:54728"/>
        <dbReference type="Rhea" id="RHEA-COMP:10505"/>
        <dbReference type="Rhea" id="RHEA-COMP:10506"/>
        <dbReference type="ChEBI" id="CHEBI:57288"/>
        <dbReference type="ChEBI" id="CHEBI:57384"/>
        <dbReference type="ChEBI" id="CHEBI:83144"/>
        <dbReference type="ChEBI" id="CHEBI:83145"/>
        <dbReference type="EC" id="2.1.3.15"/>
    </reaction>
</comment>
<comment type="cofactor">
    <cofactor evidence="1">
        <name>Zn(2+)</name>
        <dbReference type="ChEBI" id="CHEBI:29105"/>
    </cofactor>
    <text evidence="1">Binds 1 zinc ion per subunit.</text>
</comment>
<comment type="pathway">
    <text evidence="1">Lipid metabolism; malonyl-CoA biosynthesis; malonyl-CoA from acetyl-CoA: step 1/1.</text>
</comment>
<comment type="subunit">
    <text evidence="1">Acetyl-CoA carboxylase is a heterohexamer composed of biotin carboxyl carrier protein (AccB), biotin carboxylase (AccC) and two subunits each of ACCase subunit alpha (AccA) and ACCase subunit beta (AccD).</text>
</comment>
<comment type="subcellular location">
    <subcellularLocation>
        <location evidence="1">Cytoplasm</location>
    </subcellularLocation>
</comment>
<comment type="similarity">
    <text evidence="1">Belongs to the AccD/PCCB family.</text>
</comment>
<dbReference type="EC" id="2.1.3.15" evidence="1"/>
<dbReference type="EMBL" id="DQ489736">
    <property type="protein sequence ID" value="ACA82143.1"/>
    <property type="molecule type" value="Genomic_DNA"/>
</dbReference>
<dbReference type="RefSeq" id="WP_004904324.1">
    <property type="nucleotide sequence ID" value="NC_010471.1"/>
</dbReference>
<dbReference type="SMR" id="B1MX91"/>
<dbReference type="STRING" id="349519.LCK_00310"/>
<dbReference type="KEGG" id="lci:LCK_00310"/>
<dbReference type="eggNOG" id="COG0777">
    <property type="taxonomic scope" value="Bacteria"/>
</dbReference>
<dbReference type="HOGENOM" id="CLU_015486_1_0_9"/>
<dbReference type="OrthoDB" id="9772975at2"/>
<dbReference type="UniPathway" id="UPA00655">
    <property type="reaction ID" value="UER00711"/>
</dbReference>
<dbReference type="Proteomes" id="UP000002166">
    <property type="component" value="Chromosome"/>
</dbReference>
<dbReference type="GO" id="GO:0009317">
    <property type="term" value="C:acetyl-CoA carboxylase complex"/>
    <property type="evidence" value="ECO:0007669"/>
    <property type="project" value="InterPro"/>
</dbReference>
<dbReference type="GO" id="GO:0003989">
    <property type="term" value="F:acetyl-CoA carboxylase activity"/>
    <property type="evidence" value="ECO:0007669"/>
    <property type="project" value="InterPro"/>
</dbReference>
<dbReference type="GO" id="GO:0005524">
    <property type="term" value="F:ATP binding"/>
    <property type="evidence" value="ECO:0007669"/>
    <property type="project" value="UniProtKB-KW"/>
</dbReference>
<dbReference type="GO" id="GO:0016743">
    <property type="term" value="F:carboxyl- or carbamoyltransferase activity"/>
    <property type="evidence" value="ECO:0007669"/>
    <property type="project" value="UniProtKB-UniRule"/>
</dbReference>
<dbReference type="GO" id="GO:0008270">
    <property type="term" value="F:zinc ion binding"/>
    <property type="evidence" value="ECO:0007669"/>
    <property type="project" value="UniProtKB-UniRule"/>
</dbReference>
<dbReference type="GO" id="GO:0006633">
    <property type="term" value="P:fatty acid biosynthetic process"/>
    <property type="evidence" value="ECO:0007669"/>
    <property type="project" value="UniProtKB-KW"/>
</dbReference>
<dbReference type="GO" id="GO:2001295">
    <property type="term" value="P:malonyl-CoA biosynthetic process"/>
    <property type="evidence" value="ECO:0007669"/>
    <property type="project" value="UniProtKB-UniRule"/>
</dbReference>
<dbReference type="Gene3D" id="3.90.226.10">
    <property type="entry name" value="2-enoyl-CoA Hydratase, Chain A, domain 1"/>
    <property type="match status" value="1"/>
</dbReference>
<dbReference type="HAMAP" id="MF_01395">
    <property type="entry name" value="AcetylCoA_CT_beta"/>
    <property type="match status" value="1"/>
</dbReference>
<dbReference type="InterPro" id="IPR034733">
    <property type="entry name" value="AcCoA_carboxyl_beta"/>
</dbReference>
<dbReference type="InterPro" id="IPR000438">
    <property type="entry name" value="Acetyl_CoA_COase_Trfase_b_su"/>
</dbReference>
<dbReference type="InterPro" id="IPR029045">
    <property type="entry name" value="ClpP/crotonase-like_dom_sf"/>
</dbReference>
<dbReference type="InterPro" id="IPR011762">
    <property type="entry name" value="COA_CT_N"/>
</dbReference>
<dbReference type="PANTHER" id="PTHR42995">
    <property type="entry name" value="ACETYL-COENZYME A CARBOXYLASE CARBOXYL TRANSFERASE SUBUNIT BETA, CHLOROPLASTIC"/>
    <property type="match status" value="1"/>
</dbReference>
<dbReference type="PANTHER" id="PTHR42995:SF5">
    <property type="entry name" value="ACETYL-COENZYME A CARBOXYLASE CARBOXYL TRANSFERASE SUBUNIT BETA, CHLOROPLASTIC"/>
    <property type="match status" value="1"/>
</dbReference>
<dbReference type="Pfam" id="PF01039">
    <property type="entry name" value="Carboxyl_trans"/>
    <property type="match status" value="1"/>
</dbReference>
<dbReference type="PRINTS" id="PR01070">
    <property type="entry name" value="ACCCTRFRASEB"/>
</dbReference>
<dbReference type="SUPFAM" id="SSF52096">
    <property type="entry name" value="ClpP/crotonase"/>
    <property type="match status" value="1"/>
</dbReference>
<dbReference type="PROSITE" id="PS50980">
    <property type="entry name" value="COA_CT_NTER"/>
    <property type="match status" value="1"/>
</dbReference>
<keyword id="KW-0067">ATP-binding</keyword>
<keyword id="KW-0963">Cytoplasm</keyword>
<keyword id="KW-0275">Fatty acid biosynthesis</keyword>
<keyword id="KW-0276">Fatty acid metabolism</keyword>
<keyword id="KW-0444">Lipid biosynthesis</keyword>
<keyword id="KW-0443">Lipid metabolism</keyword>
<keyword id="KW-0479">Metal-binding</keyword>
<keyword id="KW-0547">Nucleotide-binding</keyword>
<keyword id="KW-1185">Reference proteome</keyword>
<keyword id="KW-0808">Transferase</keyword>
<keyword id="KW-0862">Zinc</keyword>
<keyword id="KW-0863">Zinc-finger</keyword>
<evidence type="ECO:0000255" key="1">
    <source>
        <dbReference type="HAMAP-Rule" id="MF_01395"/>
    </source>
</evidence>
<evidence type="ECO:0000255" key="2">
    <source>
        <dbReference type="PROSITE-ProRule" id="PRU01136"/>
    </source>
</evidence>
<sequence length="279" mass="30507">MDLYENQRSTSKIKRDASVNDRIPDGLFLACPYCGTQMYNKQLGDYRVCAKCGYGFRLQARERVALLTDNFEEMDADIEMTTPDFPGYAEKLARAKSQTDLGESVLTGVANIEGEQVALGVMDSYFMMGSLGSMTGEKITRLFEYATAHQLPVVLFTASGGARMQEGINSLMQMAKVSAAVAAHQEAGLLYLVVLTDPTTGGVTASFAMQGDVTLAEPHALVGFAGARVIESTIHEKLPKDFQRVETLLENGFVDKIVPRAELGQIIAKIVKLHHRTEI</sequence>
<reference key="1">
    <citation type="journal article" date="2008" name="J. Bacteriol.">
        <title>Complete genome sequence of Leuconostoc citreum KM20.</title>
        <authorList>
            <person name="Kim J.F."/>
            <person name="Jeong H."/>
            <person name="Lee J.-S."/>
            <person name="Choi S.-H."/>
            <person name="Ha M."/>
            <person name="Hur C.-G."/>
            <person name="Kim J.-S."/>
            <person name="Lee S."/>
            <person name="Park H.-S."/>
            <person name="Park Y.-H."/>
            <person name="Oh T.K."/>
        </authorList>
    </citation>
    <scope>NUCLEOTIDE SEQUENCE [LARGE SCALE GENOMIC DNA]</scope>
    <source>
        <strain>KM20</strain>
    </source>
</reference>
<feature type="chain" id="PRO_0000389778" description="Acetyl-coenzyme A carboxylase carboxyl transferase subunit beta">
    <location>
        <begin position="1"/>
        <end position="279"/>
    </location>
</feature>
<feature type="domain" description="CoA carboxyltransferase N-terminal" evidence="2">
    <location>
        <begin position="27"/>
        <end position="279"/>
    </location>
</feature>
<feature type="zinc finger region" description="C4-type" evidence="1">
    <location>
        <begin position="31"/>
        <end position="52"/>
    </location>
</feature>
<feature type="binding site" evidence="1">
    <location>
        <position position="31"/>
    </location>
    <ligand>
        <name>Zn(2+)</name>
        <dbReference type="ChEBI" id="CHEBI:29105"/>
    </ligand>
</feature>
<feature type="binding site" evidence="1">
    <location>
        <position position="34"/>
    </location>
    <ligand>
        <name>Zn(2+)</name>
        <dbReference type="ChEBI" id="CHEBI:29105"/>
    </ligand>
</feature>
<feature type="binding site" evidence="1">
    <location>
        <position position="49"/>
    </location>
    <ligand>
        <name>Zn(2+)</name>
        <dbReference type="ChEBI" id="CHEBI:29105"/>
    </ligand>
</feature>
<feature type="binding site" evidence="1">
    <location>
        <position position="52"/>
    </location>
    <ligand>
        <name>Zn(2+)</name>
        <dbReference type="ChEBI" id="CHEBI:29105"/>
    </ligand>
</feature>
<gene>
    <name evidence="1" type="primary">accD</name>
    <name type="ordered locus">LCK_00310</name>
</gene>
<accession>B1MX91</accession>
<organism>
    <name type="scientific">Leuconostoc citreum (strain KM20)</name>
    <dbReference type="NCBI Taxonomy" id="349519"/>
    <lineage>
        <taxon>Bacteria</taxon>
        <taxon>Bacillati</taxon>
        <taxon>Bacillota</taxon>
        <taxon>Bacilli</taxon>
        <taxon>Lactobacillales</taxon>
        <taxon>Lactobacillaceae</taxon>
        <taxon>Leuconostoc</taxon>
    </lineage>
</organism>
<name>ACCD_LEUCK</name>
<protein>
    <recommendedName>
        <fullName evidence="1">Acetyl-coenzyme A carboxylase carboxyl transferase subunit beta</fullName>
        <shortName evidence="1">ACCase subunit beta</shortName>
        <shortName evidence="1">Acetyl-CoA carboxylase carboxyltransferase subunit beta</shortName>
        <ecNumber evidence="1">2.1.3.15</ecNumber>
    </recommendedName>
</protein>